<dbReference type="EC" id="4.2.1.17" evidence="1"/>
<dbReference type="EC" id="5.1.2.3" evidence="1"/>
<dbReference type="EC" id="1.1.1.35" evidence="1"/>
<dbReference type="EMBL" id="CP000038">
    <property type="protein sequence ID" value="AAZ89040.1"/>
    <property type="molecule type" value="Genomic_DNA"/>
</dbReference>
<dbReference type="RefSeq" id="WP_000424986.1">
    <property type="nucleotide sequence ID" value="NC_007384.1"/>
</dbReference>
<dbReference type="SMR" id="Q3YZM2"/>
<dbReference type="GeneID" id="93774835"/>
<dbReference type="KEGG" id="ssn:SSON_2397"/>
<dbReference type="HOGENOM" id="CLU_009834_16_1_6"/>
<dbReference type="UniPathway" id="UPA00659"/>
<dbReference type="Proteomes" id="UP000002529">
    <property type="component" value="Chromosome"/>
</dbReference>
<dbReference type="GO" id="GO:0005737">
    <property type="term" value="C:cytoplasm"/>
    <property type="evidence" value="ECO:0007669"/>
    <property type="project" value="UniProtKB-SubCell"/>
</dbReference>
<dbReference type="GO" id="GO:0008692">
    <property type="term" value="F:3-hydroxybutyryl-CoA epimerase activity"/>
    <property type="evidence" value="ECO:0007669"/>
    <property type="project" value="UniProtKB-UniRule"/>
</dbReference>
<dbReference type="GO" id="GO:0004300">
    <property type="term" value="F:enoyl-CoA hydratase activity"/>
    <property type="evidence" value="ECO:0007669"/>
    <property type="project" value="UniProtKB-UniRule"/>
</dbReference>
<dbReference type="GO" id="GO:0016509">
    <property type="term" value="F:long-chain-3-hydroxyacyl-CoA dehydrogenase activity"/>
    <property type="evidence" value="ECO:0007669"/>
    <property type="project" value="TreeGrafter"/>
</dbReference>
<dbReference type="GO" id="GO:0070403">
    <property type="term" value="F:NAD+ binding"/>
    <property type="evidence" value="ECO:0007669"/>
    <property type="project" value="InterPro"/>
</dbReference>
<dbReference type="GO" id="GO:0006635">
    <property type="term" value="P:fatty acid beta-oxidation"/>
    <property type="evidence" value="ECO:0007669"/>
    <property type="project" value="UniProtKB-UniRule"/>
</dbReference>
<dbReference type="CDD" id="cd06558">
    <property type="entry name" value="crotonase-like"/>
    <property type="match status" value="1"/>
</dbReference>
<dbReference type="FunFam" id="1.10.1040.50:FF:000003">
    <property type="entry name" value="Fatty acid oxidation complex subunit alpha"/>
    <property type="match status" value="1"/>
</dbReference>
<dbReference type="FunFam" id="3.90.226.10:FF:000011">
    <property type="entry name" value="Fatty acid oxidation complex subunit alpha"/>
    <property type="match status" value="1"/>
</dbReference>
<dbReference type="FunFam" id="3.40.50.720:FF:000009">
    <property type="entry name" value="Fatty oxidation complex, alpha subunit"/>
    <property type="match status" value="1"/>
</dbReference>
<dbReference type="Gene3D" id="1.10.1040.50">
    <property type="match status" value="1"/>
</dbReference>
<dbReference type="Gene3D" id="3.90.226.10">
    <property type="entry name" value="2-enoyl-CoA Hydratase, Chain A, domain 1"/>
    <property type="match status" value="1"/>
</dbReference>
<dbReference type="Gene3D" id="3.40.50.720">
    <property type="entry name" value="NAD(P)-binding Rossmann-like Domain"/>
    <property type="match status" value="1"/>
</dbReference>
<dbReference type="HAMAP" id="MF_01617">
    <property type="entry name" value="FadJ"/>
    <property type="match status" value="1"/>
</dbReference>
<dbReference type="InterPro" id="IPR006180">
    <property type="entry name" value="3-OHacyl-CoA_DH_CS"/>
</dbReference>
<dbReference type="InterPro" id="IPR006176">
    <property type="entry name" value="3-OHacyl-CoA_DH_NAD-bd"/>
</dbReference>
<dbReference type="InterPro" id="IPR006108">
    <property type="entry name" value="3HC_DH_C"/>
</dbReference>
<dbReference type="InterPro" id="IPR008927">
    <property type="entry name" value="6-PGluconate_DH-like_C_sf"/>
</dbReference>
<dbReference type="InterPro" id="IPR029045">
    <property type="entry name" value="ClpP/crotonase-like_dom_sf"/>
</dbReference>
<dbReference type="InterPro" id="IPR001753">
    <property type="entry name" value="Enoyl-CoA_hydra/iso"/>
</dbReference>
<dbReference type="InterPro" id="IPR050136">
    <property type="entry name" value="FA_oxidation_alpha_subunit"/>
</dbReference>
<dbReference type="InterPro" id="IPR012802">
    <property type="entry name" value="FadJ"/>
</dbReference>
<dbReference type="InterPro" id="IPR036291">
    <property type="entry name" value="NAD(P)-bd_dom_sf"/>
</dbReference>
<dbReference type="NCBIfam" id="TIGR02440">
    <property type="entry name" value="FadJ"/>
    <property type="match status" value="1"/>
</dbReference>
<dbReference type="NCBIfam" id="NF008363">
    <property type="entry name" value="PRK11154.1"/>
    <property type="match status" value="1"/>
</dbReference>
<dbReference type="PANTHER" id="PTHR43612">
    <property type="entry name" value="TRIFUNCTIONAL ENZYME SUBUNIT ALPHA"/>
    <property type="match status" value="1"/>
</dbReference>
<dbReference type="PANTHER" id="PTHR43612:SF3">
    <property type="entry name" value="TRIFUNCTIONAL ENZYME SUBUNIT ALPHA, MITOCHONDRIAL"/>
    <property type="match status" value="1"/>
</dbReference>
<dbReference type="Pfam" id="PF00725">
    <property type="entry name" value="3HCDH"/>
    <property type="match status" value="2"/>
</dbReference>
<dbReference type="Pfam" id="PF02737">
    <property type="entry name" value="3HCDH_N"/>
    <property type="match status" value="1"/>
</dbReference>
<dbReference type="Pfam" id="PF00378">
    <property type="entry name" value="ECH_1"/>
    <property type="match status" value="1"/>
</dbReference>
<dbReference type="SUPFAM" id="SSF48179">
    <property type="entry name" value="6-phosphogluconate dehydrogenase C-terminal domain-like"/>
    <property type="match status" value="2"/>
</dbReference>
<dbReference type="SUPFAM" id="SSF52096">
    <property type="entry name" value="ClpP/crotonase"/>
    <property type="match status" value="1"/>
</dbReference>
<dbReference type="SUPFAM" id="SSF51735">
    <property type="entry name" value="NAD(P)-binding Rossmann-fold domains"/>
    <property type="match status" value="1"/>
</dbReference>
<dbReference type="PROSITE" id="PS00067">
    <property type="entry name" value="3HCDH"/>
    <property type="match status" value="1"/>
</dbReference>
<gene>
    <name evidence="1" type="primary">fadJ</name>
    <name type="ordered locus">SSON_2397</name>
</gene>
<name>FADJ_SHISS</name>
<reference key="1">
    <citation type="journal article" date="2005" name="Nucleic Acids Res.">
        <title>Genome dynamics and diversity of Shigella species, the etiologic agents of bacillary dysentery.</title>
        <authorList>
            <person name="Yang F."/>
            <person name="Yang J."/>
            <person name="Zhang X."/>
            <person name="Chen L."/>
            <person name="Jiang Y."/>
            <person name="Yan Y."/>
            <person name="Tang X."/>
            <person name="Wang J."/>
            <person name="Xiong Z."/>
            <person name="Dong J."/>
            <person name="Xue Y."/>
            <person name="Zhu Y."/>
            <person name="Xu X."/>
            <person name="Sun L."/>
            <person name="Chen S."/>
            <person name="Nie H."/>
            <person name="Peng J."/>
            <person name="Xu J."/>
            <person name="Wang Y."/>
            <person name="Yuan Z."/>
            <person name="Wen Y."/>
            <person name="Yao Z."/>
            <person name="Shen Y."/>
            <person name="Qiang B."/>
            <person name="Hou Y."/>
            <person name="Yu J."/>
            <person name="Jin Q."/>
        </authorList>
    </citation>
    <scope>NUCLEOTIDE SEQUENCE [LARGE SCALE GENOMIC DNA]</scope>
    <source>
        <strain>Ss046</strain>
    </source>
</reference>
<keyword id="KW-0963">Cytoplasm</keyword>
<keyword id="KW-0276">Fatty acid metabolism</keyword>
<keyword id="KW-0413">Isomerase</keyword>
<keyword id="KW-0442">Lipid degradation</keyword>
<keyword id="KW-0443">Lipid metabolism</keyword>
<keyword id="KW-0456">Lyase</keyword>
<keyword id="KW-0511">Multifunctional enzyme</keyword>
<keyword id="KW-0520">NAD</keyword>
<keyword id="KW-0560">Oxidoreductase</keyword>
<keyword id="KW-1185">Reference proteome</keyword>
<protein>
    <recommendedName>
        <fullName evidence="1">Fatty acid oxidation complex subunit alpha</fullName>
    </recommendedName>
    <domain>
        <recommendedName>
            <fullName evidence="1">Enoyl-CoA hydratase/3-hydroxybutyryl-CoA epimerase</fullName>
            <ecNumber evidence="1">4.2.1.17</ecNumber>
            <ecNumber evidence="1">5.1.2.3</ecNumber>
        </recommendedName>
    </domain>
    <domain>
        <recommendedName>
            <fullName evidence="1">3-hydroxyacyl-CoA dehydrogenase</fullName>
            <ecNumber evidence="1">1.1.1.35</ecNumber>
        </recommendedName>
    </domain>
</protein>
<comment type="function">
    <text evidence="1">Catalyzes the formation of a hydroxyacyl-CoA by addition of water on enoyl-CoA. Also exhibits 3-hydroxyacyl-CoA epimerase and 3-hydroxyacyl-CoA dehydrogenase activities.</text>
</comment>
<comment type="catalytic activity">
    <reaction evidence="1">
        <text>a (3S)-3-hydroxyacyl-CoA = a (2E)-enoyl-CoA + H2O</text>
        <dbReference type="Rhea" id="RHEA:16105"/>
        <dbReference type="ChEBI" id="CHEBI:15377"/>
        <dbReference type="ChEBI" id="CHEBI:57318"/>
        <dbReference type="ChEBI" id="CHEBI:58856"/>
        <dbReference type="EC" id="4.2.1.17"/>
    </reaction>
</comment>
<comment type="catalytic activity">
    <reaction evidence="1">
        <text>a 4-saturated-(3S)-3-hydroxyacyl-CoA = a (3E)-enoyl-CoA + H2O</text>
        <dbReference type="Rhea" id="RHEA:20724"/>
        <dbReference type="ChEBI" id="CHEBI:15377"/>
        <dbReference type="ChEBI" id="CHEBI:58521"/>
        <dbReference type="ChEBI" id="CHEBI:137480"/>
        <dbReference type="EC" id="4.2.1.17"/>
    </reaction>
</comment>
<comment type="catalytic activity">
    <reaction evidence="1">
        <text>a (3S)-3-hydroxyacyl-CoA + NAD(+) = a 3-oxoacyl-CoA + NADH + H(+)</text>
        <dbReference type="Rhea" id="RHEA:22432"/>
        <dbReference type="ChEBI" id="CHEBI:15378"/>
        <dbReference type="ChEBI" id="CHEBI:57318"/>
        <dbReference type="ChEBI" id="CHEBI:57540"/>
        <dbReference type="ChEBI" id="CHEBI:57945"/>
        <dbReference type="ChEBI" id="CHEBI:90726"/>
        <dbReference type="EC" id="1.1.1.35"/>
    </reaction>
</comment>
<comment type="catalytic activity">
    <reaction evidence="1">
        <text>(3S)-3-hydroxybutanoyl-CoA = (3R)-3-hydroxybutanoyl-CoA</text>
        <dbReference type="Rhea" id="RHEA:21760"/>
        <dbReference type="ChEBI" id="CHEBI:57315"/>
        <dbReference type="ChEBI" id="CHEBI:57316"/>
        <dbReference type="EC" id="5.1.2.3"/>
    </reaction>
</comment>
<comment type="pathway">
    <text evidence="1">Lipid metabolism; fatty acid beta-oxidation.</text>
</comment>
<comment type="subunit">
    <text evidence="1">Heterotetramer of two alpha chains (FadJ) and two beta chains (FadI).</text>
</comment>
<comment type="subcellular location">
    <subcellularLocation>
        <location evidence="1">Cytoplasm</location>
    </subcellularLocation>
</comment>
<comment type="similarity">
    <text evidence="1">In the N-terminal section; belongs to the enoyl-CoA hydratase/isomerase family.</text>
</comment>
<comment type="similarity">
    <text evidence="1">In the central section; belongs to the 3-hydroxyacyl-CoA dehydrogenase family.</text>
</comment>
<feature type="chain" id="PRO_0000273989" description="Fatty acid oxidation complex subunit alpha">
    <location>
        <begin position="1"/>
        <end position="714"/>
    </location>
</feature>
<feature type="region of interest" description="Enoyl-CoA hydratase" evidence="1">
    <location>
        <begin position="1"/>
        <end position="190"/>
    </location>
</feature>
<feature type="region of interest" description="3-hydroxyacyl-CoA dehydrogenase" evidence="1">
    <location>
        <begin position="306"/>
        <end position="714"/>
    </location>
</feature>
<feature type="site" description="Important for catalytic activity" evidence="1">
    <location>
        <position position="118"/>
    </location>
</feature>
<feature type="site" description="Important for catalytic activity" evidence="1">
    <location>
        <position position="140"/>
    </location>
</feature>
<sequence>MEMASAFTLNVRLDNIAIITIDVPDEKMNTLKAEFASQVRAIIKQLRENKELRGVVFISAKPDNFIAGADINMIGNCKTAQEAEALARQGQQLMAEIHALPIPVIAAIHGACLGGGLELALACHGRVCTDDPKTVLGLPEVQLGLLPGSGGTQRLPRLIGVSTALEMILTGKQLRAKQALKLGLVDDVVPHSILLEAAVELAKKDRPSSRPLPVRERILAGPLGRALLFKMVGKKTEHKTQGNYPATERILEVVETGLAQGTSSGYDAEARAFGELAMTPQSQALRSIFFASTDVKKDPGSDAPPAPLNSVGILGGGLMGGGIAYVTACKAGLPVRIKDINPQGINHALKYSWDQLEGKVRRRHLKASERDKQLALISGTTDYRGFAHRDLIIEAVFENLELKQQMVAEVEQNCAAHTIFASNTSSLPIGDIAAHAARPEQVIGLHFFSPVEKMPLVEIIPHAGTSAQTIATTVKLAKKQGKTPIVVRDKAGFYVNRILAPYINEAIRMLTEGERVEHIDAALVKFGFPVGPIQLLDEVGIDTGTKIIPVLEAAYGERFSAPANVVSSILNDDRKGRKNGRGFYLYGQKGRKSKKQVDPAIYPLIGAQGQGRLSAPQVAERCVMLMLNEAVRCVDEQVIRSVRDGDIGAVFGIGFPPFLGGPFRYIDSLGAGEVVAIMQRLATQYGSRFTPCERLVEMGARGESFWKTTATDLQ</sequence>
<accession>Q3YZM2</accession>
<organism>
    <name type="scientific">Shigella sonnei (strain Ss046)</name>
    <dbReference type="NCBI Taxonomy" id="300269"/>
    <lineage>
        <taxon>Bacteria</taxon>
        <taxon>Pseudomonadati</taxon>
        <taxon>Pseudomonadota</taxon>
        <taxon>Gammaproteobacteria</taxon>
        <taxon>Enterobacterales</taxon>
        <taxon>Enterobacteriaceae</taxon>
        <taxon>Shigella</taxon>
    </lineage>
</organism>
<evidence type="ECO:0000255" key="1">
    <source>
        <dbReference type="HAMAP-Rule" id="MF_01617"/>
    </source>
</evidence>
<proteinExistence type="inferred from homology"/>